<evidence type="ECO:0000250" key="1"/>
<evidence type="ECO:0000255" key="2">
    <source>
        <dbReference type="PROSITE-ProRule" id="PRU00088"/>
    </source>
</evidence>
<evidence type="ECO:0000305" key="3"/>
<evidence type="ECO:0007829" key="4">
    <source>
        <dbReference type="PDB" id="2BMV"/>
    </source>
</evidence>
<gene>
    <name type="primary">fldA</name>
    <name type="ordered locus">HP_1161</name>
</gene>
<reference key="1">
    <citation type="journal article" date="1997" name="Nature">
        <title>The complete genome sequence of the gastric pathogen Helicobacter pylori.</title>
        <authorList>
            <person name="Tomb J.-F."/>
            <person name="White O."/>
            <person name="Kerlavage A.R."/>
            <person name="Clayton R.A."/>
            <person name="Sutton G.G."/>
            <person name="Fleischmann R.D."/>
            <person name="Ketchum K.A."/>
            <person name="Klenk H.-P."/>
            <person name="Gill S.R."/>
            <person name="Dougherty B.A."/>
            <person name="Nelson K.E."/>
            <person name="Quackenbush J."/>
            <person name="Zhou L."/>
            <person name="Kirkness E.F."/>
            <person name="Peterson S.N."/>
            <person name="Loftus B.J."/>
            <person name="Richardson D.L."/>
            <person name="Dodson R.J."/>
            <person name="Khalak H.G."/>
            <person name="Glodek A."/>
            <person name="McKenney K."/>
            <person name="FitzGerald L.M."/>
            <person name="Lee N."/>
            <person name="Adams M.D."/>
            <person name="Hickey E.K."/>
            <person name="Berg D.E."/>
            <person name="Gocayne J.D."/>
            <person name="Utterback T.R."/>
            <person name="Peterson J.D."/>
            <person name="Kelley J.M."/>
            <person name="Cotton M.D."/>
            <person name="Weidman J.F."/>
            <person name="Fujii C."/>
            <person name="Bowman C."/>
            <person name="Watthey L."/>
            <person name="Wallin E."/>
            <person name="Hayes W.S."/>
            <person name="Borodovsky M."/>
            <person name="Karp P.D."/>
            <person name="Smith H.O."/>
            <person name="Fraser C.M."/>
            <person name="Venter J.C."/>
        </authorList>
    </citation>
    <scope>NUCLEOTIDE SEQUENCE [LARGE SCALE GENOMIC DNA]</scope>
    <source>
        <strain>ATCC 700392 / 26695</strain>
    </source>
</reference>
<organism>
    <name type="scientific">Helicobacter pylori (strain ATCC 700392 / 26695)</name>
    <name type="common">Campylobacter pylori</name>
    <dbReference type="NCBI Taxonomy" id="85962"/>
    <lineage>
        <taxon>Bacteria</taxon>
        <taxon>Pseudomonadati</taxon>
        <taxon>Campylobacterota</taxon>
        <taxon>Epsilonproteobacteria</taxon>
        <taxon>Campylobacterales</taxon>
        <taxon>Helicobacteraceae</taxon>
        <taxon>Helicobacter</taxon>
    </lineage>
</organism>
<name>FLAV_HELPY</name>
<comment type="function">
    <text evidence="1">Low-potential electron donor to a number of redox enzymes.</text>
</comment>
<comment type="cofactor">
    <cofactor evidence="1">
        <name>FMN</name>
        <dbReference type="ChEBI" id="CHEBI:58210"/>
    </cofactor>
</comment>
<comment type="similarity">
    <text evidence="3">Belongs to the flavodoxin family.</text>
</comment>
<proteinExistence type="evidence at protein level"/>
<protein>
    <recommendedName>
        <fullName>Flavodoxin</fullName>
    </recommendedName>
</protein>
<sequence length="164" mass="17492">MGKIGIFFGTDSGNAEAIAEKISKAIGNAEVVDVAKASKEQFNSFTKVILVAPTAGAGDLQTDWEDFLGTLEASDFATKTIGLVGLGDQDTYSETFAEGIFHIYEKAKAGKVVGQTPTDGYHFEASKAVEGGKFVGLVIDEDNQDDLTDERISKWVEQVKGSFA</sequence>
<dbReference type="EMBL" id="AE000511">
    <property type="protein sequence ID" value="AAD08207.1"/>
    <property type="molecule type" value="Genomic_DNA"/>
</dbReference>
<dbReference type="PIR" id="A64665">
    <property type="entry name" value="A64665"/>
</dbReference>
<dbReference type="RefSeq" id="NP_207952.1">
    <property type="nucleotide sequence ID" value="NC_000915.1"/>
</dbReference>
<dbReference type="RefSeq" id="WP_000516078.1">
    <property type="nucleotide sequence ID" value="NC_018939.1"/>
</dbReference>
<dbReference type="PDB" id="2BMV">
    <property type="method" value="X-ray"/>
    <property type="resolution" value="2.11 A"/>
    <property type="chains" value="A=1-164"/>
</dbReference>
<dbReference type="PDB" id="2W5U">
    <property type="method" value="X-ray"/>
    <property type="resolution" value="2.62 A"/>
    <property type="chains" value="A/B=1-164"/>
</dbReference>
<dbReference type="PDBsum" id="2BMV"/>
<dbReference type="PDBsum" id="2W5U"/>
<dbReference type="SMR" id="O25776"/>
<dbReference type="FunCoup" id="O25776">
    <property type="interactions" value="42"/>
</dbReference>
<dbReference type="IntAct" id="O25776">
    <property type="interactions" value="1"/>
</dbReference>
<dbReference type="STRING" id="85962.HP_1161"/>
<dbReference type="ChEMBL" id="CHEMBL4523947"/>
<dbReference type="PaxDb" id="85962-C694_05995"/>
<dbReference type="EnsemblBacteria" id="AAD08207">
    <property type="protein sequence ID" value="AAD08207"/>
    <property type="gene ID" value="HP_1161"/>
</dbReference>
<dbReference type="KEGG" id="heo:C694_05995"/>
<dbReference type="KEGG" id="hpy:HP_1161"/>
<dbReference type="PATRIC" id="fig|85962.47.peg.1245"/>
<dbReference type="eggNOG" id="COG0716">
    <property type="taxonomic scope" value="Bacteria"/>
</dbReference>
<dbReference type="InParanoid" id="O25776"/>
<dbReference type="OrthoDB" id="359268at2"/>
<dbReference type="PhylomeDB" id="O25776"/>
<dbReference type="EvolutionaryTrace" id="O25776"/>
<dbReference type="PRO" id="PR:O25776"/>
<dbReference type="Proteomes" id="UP000000429">
    <property type="component" value="Chromosome"/>
</dbReference>
<dbReference type="GO" id="GO:0010181">
    <property type="term" value="F:FMN binding"/>
    <property type="evidence" value="ECO:0007669"/>
    <property type="project" value="InterPro"/>
</dbReference>
<dbReference type="Gene3D" id="3.40.50.360">
    <property type="match status" value="1"/>
</dbReference>
<dbReference type="InterPro" id="IPR050619">
    <property type="entry name" value="Flavodoxin"/>
</dbReference>
<dbReference type="InterPro" id="IPR008254">
    <property type="entry name" value="Flavodoxin/NO_synth"/>
</dbReference>
<dbReference type="InterPro" id="IPR010086">
    <property type="entry name" value="Flavodoxin_lc"/>
</dbReference>
<dbReference type="InterPro" id="IPR029039">
    <property type="entry name" value="Flavoprotein-like_sf"/>
</dbReference>
<dbReference type="NCBIfam" id="TIGR01752">
    <property type="entry name" value="flav_long"/>
    <property type="match status" value="1"/>
</dbReference>
<dbReference type="NCBIfam" id="NF006739">
    <property type="entry name" value="PRK09267.1-5"/>
    <property type="match status" value="1"/>
</dbReference>
<dbReference type="PANTHER" id="PTHR42809:SF1">
    <property type="entry name" value="FLAVODOXIN 1"/>
    <property type="match status" value="1"/>
</dbReference>
<dbReference type="PANTHER" id="PTHR42809">
    <property type="entry name" value="FLAVODOXIN 2"/>
    <property type="match status" value="1"/>
</dbReference>
<dbReference type="Pfam" id="PF00258">
    <property type="entry name" value="Flavodoxin_1"/>
    <property type="match status" value="1"/>
</dbReference>
<dbReference type="PIRSF" id="PIRSF038996">
    <property type="entry name" value="FldA"/>
    <property type="match status" value="1"/>
</dbReference>
<dbReference type="SUPFAM" id="SSF52218">
    <property type="entry name" value="Flavoproteins"/>
    <property type="match status" value="1"/>
</dbReference>
<dbReference type="PROSITE" id="PS50902">
    <property type="entry name" value="FLAVODOXIN_LIKE"/>
    <property type="match status" value="1"/>
</dbReference>
<accession>O25776</accession>
<feature type="chain" id="PRO_0000171634" description="Flavodoxin">
    <location>
        <begin position="1"/>
        <end position="164"/>
    </location>
</feature>
<feature type="domain" description="Flavodoxin-like" evidence="2">
    <location>
        <begin position="4"/>
        <end position="160"/>
    </location>
</feature>
<feature type="strand" evidence="4">
    <location>
        <begin position="4"/>
        <end position="8"/>
    </location>
</feature>
<feature type="strand" evidence="4">
    <location>
        <begin position="11"/>
        <end position="13"/>
    </location>
</feature>
<feature type="helix" evidence="4">
    <location>
        <begin position="14"/>
        <end position="26"/>
    </location>
</feature>
<feature type="strand" evidence="4">
    <location>
        <begin position="28"/>
        <end position="33"/>
    </location>
</feature>
<feature type="helix" evidence="4">
    <location>
        <begin position="34"/>
        <end position="36"/>
    </location>
</feature>
<feature type="helix" evidence="4">
    <location>
        <begin position="39"/>
        <end position="42"/>
    </location>
</feature>
<feature type="strand" evidence="4">
    <location>
        <begin position="46"/>
        <end position="55"/>
    </location>
</feature>
<feature type="turn" evidence="4">
    <location>
        <begin position="56"/>
        <end position="58"/>
    </location>
</feature>
<feature type="helix" evidence="4">
    <location>
        <begin position="62"/>
        <end position="68"/>
    </location>
</feature>
<feature type="helix" evidence="4">
    <location>
        <begin position="74"/>
        <end position="77"/>
    </location>
</feature>
<feature type="strand" evidence="4">
    <location>
        <begin position="79"/>
        <end position="86"/>
    </location>
</feature>
<feature type="turn" evidence="4">
    <location>
        <begin position="89"/>
        <end position="91"/>
    </location>
</feature>
<feature type="turn" evidence="4">
    <location>
        <begin position="96"/>
        <end position="98"/>
    </location>
</feature>
<feature type="helix" evidence="4">
    <location>
        <begin position="99"/>
        <end position="107"/>
    </location>
</feature>
<feature type="strand" evidence="4">
    <location>
        <begin position="110"/>
        <end position="112"/>
    </location>
</feature>
<feature type="strand" evidence="4">
    <location>
        <begin position="116"/>
        <end position="118"/>
    </location>
</feature>
<feature type="strand" evidence="4">
    <location>
        <begin position="133"/>
        <end position="139"/>
    </location>
</feature>
<feature type="turn" evidence="4">
    <location>
        <begin position="141"/>
        <end position="143"/>
    </location>
</feature>
<feature type="helix" evidence="4">
    <location>
        <begin position="145"/>
        <end position="147"/>
    </location>
</feature>
<feature type="helix" evidence="4">
    <location>
        <begin position="148"/>
        <end position="159"/>
    </location>
</feature>
<feature type="turn" evidence="4">
    <location>
        <begin position="160"/>
        <end position="162"/>
    </location>
</feature>
<keyword id="KW-0002">3D-structure</keyword>
<keyword id="KW-0249">Electron transport</keyword>
<keyword id="KW-0285">Flavoprotein</keyword>
<keyword id="KW-0288">FMN</keyword>
<keyword id="KW-1185">Reference proteome</keyword>
<keyword id="KW-0813">Transport</keyword>